<keyword id="KW-0028">Amino-acid biosynthesis</keyword>
<keyword id="KW-0963">Cytoplasm</keyword>
<keyword id="KW-0368">Histidine biosynthesis</keyword>
<keyword id="KW-1185">Reference proteome</keyword>
<accession>A9AH05</accession>
<protein>
    <recommendedName>
        <fullName evidence="1">ATP phosphoribosyltransferase regulatory subunit</fullName>
    </recommendedName>
</protein>
<reference key="1">
    <citation type="submission" date="2007-10" db="EMBL/GenBank/DDBJ databases">
        <title>Complete sequence of chromosome 1 of Burkholderia multivorans ATCC 17616.</title>
        <authorList>
            <person name="Copeland A."/>
            <person name="Lucas S."/>
            <person name="Lapidus A."/>
            <person name="Barry K."/>
            <person name="Glavina del Rio T."/>
            <person name="Dalin E."/>
            <person name="Tice H."/>
            <person name="Pitluck S."/>
            <person name="Chain P."/>
            <person name="Malfatti S."/>
            <person name="Shin M."/>
            <person name="Vergez L."/>
            <person name="Schmutz J."/>
            <person name="Larimer F."/>
            <person name="Land M."/>
            <person name="Hauser L."/>
            <person name="Kyrpides N."/>
            <person name="Kim E."/>
            <person name="Tiedje J."/>
            <person name="Richardson P."/>
        </authorList>
    </citation>
    <scope>NUCLEOTIDE SEQUENCE [LARGE SCALE GENOMIC DNA]</scope>
    <source>
        <strain>ATCC 17616 / 249</strain>
    </source>
</reference>
<reference key="2">
    <citation type="submission" date="2007-04" db="EMBL/GenBank/DDBJ databases">
        <title>Complete genome sequence of Burkholderia multivorans ATCC 17616.</title>
        <authorList>
            <person name="Ohtsubo Y."/>
            <person name="Yamashita A."/>
            <person name="Kurokawa K."/>
            <person name="Takami H."/>
            <person name="Yuhara S."/>
            <person name="Nishiyama E."/>
            <person name="Endo R."/>
            <person name="Miyazaki R."/>
            <person name="Ono A."/>
            <person name="Yano K."/>
            <person name="Ito M."/>
            <person name="Sota M."/>
            <person name="Yuji N."/>
            <person name="Hattori M."/>
            <person name="Tsuda M."/>
        </authorList>
    </citation>
    <scope>NUCLEOTIDE SEQUENCE [LARGE SCALE GENOMIC DNA]</scope>
    <source>
        <strain>ATCC 17616 / 249</strain>
    </source>
</reference>
<gene>
    <name evidence="1" type="primary">hisZ</name>
    <name type="ordered locus">Bmul_1472</name>
    <name type="ordered locus">BMULJ_01770</name>
</gene>
<name>HISZ_BURM1</name>
<comment type="function">
    <text evidence="1">Required for the first step of histidine biosynthesis. May allow the feedback regulation of ATP phosphoribosyltransferase activity by histidine.</text>
</comment>
<comment type="pathway">
    <text evidence="1">Amino-acid biosynthesis; L-histidine biosynthesis; L-histidine from 5-phospho-alpha-D-ribose 1-diphosphate: step 1/9.</text>
</comment>
<comment type="subunit">
    <text evidence="1">Heteromultimer composed of HisG and HisZ subunits.</text>
</comment>
<comment type="subcellular location">
    <subcellularLocation>
        <location evidence="1">Cytoplasm</location>
    </subcellularLocation>
</comment>
<comment type="miscellaneous">
    <text>This function is generally fulfilled by the C-terminal part of HisG, which is missing in some bacteria such as this one.</text>
</comment>
<comment type="similarity">
    <text evidence="1">Belongs to the class-II aminoacyl-tRNA synthetase family. HisZ subfamily.</text>
</comment>
<evidence type="ECO:0000255" key="1">
    <source>
        <dbReference type="HAMAP-Rule" id="MF_00125"/>
    </source>
</evidence>
<sequence>MSTWLLPENIADVLPSEARKIEELRRRLLDRFRSYGYEMVMPPLLEYLESLLTSGGADLRLRTFKLVDQLSGRTLGLRADITPQVARIDAHLLNRQGVTRLCYAGHVMHTRPRGLHATREQIQIGAEIYGHAGLEADLEIQQLMLDALHLAGLSRIRLDLCHAGVLAALLARDTQAAARGEALYDALSGKDVPLLNELTDDLGADTRAALRALPHLYGDASVLDEARQRLPALPEIARALDDLAQLAAQAKGVEVAIDLADLRGYAYHSGAMFTAYIDGVPNAIARGGRYDHVGQAYGRARPATGFSLDLRELARISPVEARGTAILAPWAQDDALRAAVAALRDAGEVVIQALPGHDHVLDEFACDRSLVERNGAWVVEPR</sequence>
<proteinExistence type="inferred from homology"/>
<organism>
    <name type="scientific">Burkholderia multivorans (strain ATCC 17616 / 249)</name>
    <dbReference type="NCBI Taxonomy" id="395019"/>
    <lineage>
        <taxon>Bacteria</taxon>
        <taxon>Pseudomonadati</taxon>
        <taxon>Pseudomonadota</taxon>
        <taxon>Betaproteobacteria</taxon>
        <taxon>Burkholderiales</taxon>
        <taxon>Burkholderiaceae</taxon>
        <taxon>Burkholderia</taxon>
        <taxon>Burkholderia cepacia complex</taxon>
    </lineage>
</organism>
<feature type="chain" id="PRO_1000095451" description="ATP phosphoribosyltransferase regulatory subunit">
    <location>
        <begin position="1"/>
        <end position="382"/>
    </location>
</feature>
<dbReference type="EMBL" id="CP000868">
    <property type="protein sequence ID" value="ABX15160.1"/>
    <property type="molecule type" value="Genomic_DNA"/>
</dbReference>
<dbReference type="EMBL" id="AP009385">
    <property type="protein sequence ID" value="BAG43690.1"/>
    <property type="molecule type" value="Genomic_DNA"/>
</dbReference>
<dbReference type="RefSeq" id="WP_006399933.1">
    <property type="nucleotide sequence ID" value="NC_010804.1"/>
</dbReference>
<dbReference type="SMR" id="A9AH05"/>
<dbReference type="STRING" id="395019.BMULJ_01770"/>
<dbReference type="KEGG" id="bmj:BMULJ_01770"/>
<dbReference type="KEGG" id="bmu:Bmul_1472"/>
<dbReference type="eggNOG" id="COG3705">
    <property type="taxonomic scope" value="Bacteria"/>
</dbReference>
<dbReference type="HOGENOM" id="CLU_025113_0_1_4"/>
<dbReference type="UniPathway" id="UPA00031">
    <property type="reaction ID" value="UER00006"/>
</dbReference>
<dbReference type="Proteomes" id="UP000008815">
    <property type="component" value="Chromosome 1"/>
</dbReference>
<dbReference type="GO" id="GO:0005737">
    <property type="term" value="C:cytoplasm"/>
    <property type="evidence" value="ECO:0007669"/>
    <property type="project" value="UniProtKB-SubCell"/>
</dbReference>
<dbReference type="GO" id="GO:0004821">
    <property type="term" value="F:histidine-tRNA ligase activity"/>
    <property type="evidence" value="ECO:0007669"/>
    <property type="project" value="TreeGrafter"/>
</dbReference>
<dbReference type="GO" id="GO:0006427">
    <property type="term" value="P:histidyl-tRNA aminoacylation"/>
    <property type="evidence" value="ECO:0007669"/>
    <property type="project" value="TreeGrafter"/>
</dbReference>
<dbReference type="GO" id="GO:0000105">
    <property type="term" value="P:L-histidine biosynthetic process"/>
    <property type="evidence" value="ECO:0007669"/>
    <property type="project" value="UniProtKB-UniRule"/>
</dbReference>
<dbReference type="CDD" id="cd00773">
    <property type="entry name" value="HisRS-like_core"/>
    <property type="match status" value="1"/>
</dbReference>
<dbReference type="Gene3D" id="3.30.930.10">
    <property type="entry name" value="Bira Bifunctional Protein, Domain 2"/>
    <property type="match status" value="1"/>
</dbReference>
<dbReference type="HAMAP" id="MF_00125">
    <property type="entry name" value="HisZ"/>
    <property type="match status" value="1"/>
</dbReference>
<dbReference type="InterPro" id="IPR045864">
    <property type="entry name" value="aa-tRNA-synth_II/BPL/LPL"/>
</dbReference>
<dbReference type="InterPro" id="IPR041715">
    <property type="entry name" value="HisRS-like_core"/>
</dbReference>
<dbReference type="InterPro" id="IPR004516">
    <property type="entry name" value="HisRS/HisZ"/>
</dbReference>
<dbReference type="InterPro" id="IPR004517">
    <property type="entry name" value="HisZ"/>
</dbReference>
<dbReference type="NCBIfam" id="TIGR00443">
    <property type="entry name" value="hisZ_biosyn_reg"/>
    <property type="match status" value="1"/>
</dbReference>
<dbReference type="NCBIfam" id="NF008935">
    <property type="entry name" value="PRK12292.1-1"/>
    <property type="match status" value="1"/>
</dbReference>
<dbReference type="NCBIfam" id="NF009086">
    <property type="entry name" value="PRK12421.1"/>
    <property type="match status" value="1"/>
</dbReference>
<dbReference type="PANTHER" id="PTHR43707:SF1">
    <property type="entry name" value="HISTIDINE--TRNA LIGASE, MITOCHONDRIAL-RELATED"/>
    <property type="match status" value="1"/>
</dbReference>
<dbReference type="PANTHER" id="PTHR43707">
    <property type="entry name" value="HISTIDYL-TRNA SYNTHETASE"/>
    <property type="match status" value="1"/>
</dbReference>
<dbReference type="Pfam" id="PF13393">
    <property type="entry name" value="tRNA-synt_His"/>
    <property type="match status" value="1"/>
</dbReference>
<dbReference type="PIRSF" id="PIRSF001549">
    <property type="entry name" value="His-tRNA_synth"/>
    <property type="match status" value="1"/>
</dbReference>
<dbReference type="SUPFAM" id="SSF55681">
    <property type="entry name" value="Class II aaRS and biotin synthetases"/>
    <property type="match status" value="1"/>
</dbReference>